<proteinExistence type="inferred from homology"/>
<keyword id="KW-0963">Cytoplasm</keyword>
<keyword id="KW-0489">Methyltransferase</keyword>
<keyword id="KW-0698">rRNA processing</keyword>
<keyword id="KW-0949">S-adenosyl-L-methionine</keyword>
<keyword id="KW-0808">Transferase</keyword>
<organism>
    <name type="scientific">Francisella tularensis subsp. holarctica (strain FTNF002-00 / FTA)</name>
    <dbReference type="NCBI Taxonomy" id="458234"/>
    <lineage>
        <taxon>Bacteria</taxon>
        <taxon>Pseudomonadati</taxon>
        <taxon>Pseudomonadota</taxon>
        <taxon>Gammaproteobacteria</taxon>
        <taxon>Thiotrichales</taxon>
        <taxon>Francisellaceae</taxon>
        <taxon>Francisella</taxon>
    </lineage>
</organism>
<feature type="chain" id="PRO_1000087687" description="Ribosomal RNA large subunit methyltransferase E">
    <location>
        <begin position="1"/>
        <end position="206"/>
    </location>
</feature>
<feature type="active site" description="Proton acceptor" evidence="1">
    <location>
        <position position="161"/>
    </location>
</feature>
<feature type="binding site" evidence="1">
    <location>
        <position position="60"/>
    </location>
    <ligand>
        <name>S-adenosyl-L-methionine</name>
        <dbReference type="ChEBI" id="CHEBI:59789"/>
    </ligand>
</feature>
<feature type="binding site" evidence="1">
    <location>
        <position position="62"/>
    </location>
    <ligand>
        <name>S-adenosyl-L-methionine</name>
        <dbReference type="ChEBI" id="CHEBI:59789"/>
    </ligand>
</feature>
<feature type="binding site" evidence="1">
    <location>
        <position position="80"/>
    </location>
    <ligand>
        <name>S-adenosyl-L-methionine</name>
        <dbReference type="ChEBI" id="CHEBI:59789"/>
    </ligand>
</feature>
<feature type="binding site" evidence="1">
    <location>
        <position position="96"/>
    </location>
    <ligand>
        <name>S-adenosyl-L-methionine</name>
        <dbReference type="ChEBI" id="CHEBI:59789"/>
    </ligand>
</feature>
<feature type="binding site" evidence="1">
    <location>
        <position position="121"/>
    </location>
    <ligand>
        <name>S-adenosyl-L-methionine</name>
        <dbReference type="ChEBI" id="CHEBI:59789"/>
    </ligand>
</feature>
<dbReference type="EC" id="2.1.1.166" evidence="1"/>
<dbReference type="EMBL" id="CP000803">
    <property type="protein sequence ID" value="ABU60932.1"/>
    <property type="molecule type" value="Genomic_DNA"/>
</dbReference>
<dbReference type="RefSeq" id="WP_003014702.1">
    <property type="nucleotide sequence ID" value="NC_009749.1"/>
</dbReference>
<dbReference type="SMR" id="A7NAC9"/>
<dbReference type="KEGG" id="fta:FTA_0455"/>
<dbReference type="HOGENOM" id="CLU_009422_4_0_6"/>
<dbReference type="GO" id="GO:0005737">
    <property type="term" value="C:cytoplasm"/>
    <property type="evidence" value="ECO:0007669"/>
    <property type="project" value="UniProtKB-SubCell"/>
</dbReference>
<dbReference type="GO" id="GO:0008650">
    <property type="term" value="F:rRNA (uridine-2'-O-)-methyltransferase activity"/>
    <property type="evidence" value="ECO:0007669"/>
    <property type="project" value="UniProtKB-UniRule"/>
</dbReference>
<dbReference type="FunFam" id="3.40.50.150:FF:000005">
    <property type="entry name" value="Ribosomal RNA large subunit methyltransferase E"/>
    <property type="match status" value="1"/>
</dbReference>
<dbReference type="Gene3D" id="3.40.50.150">
    <property type="entry name" value="Vaccinia Virus protein VP39"/>
    <property type="match status" value="1"/>
</dbReference>
<dbReference type="HAMAP" id="MF_01547">
    <property type="entry name" value="RNA_methyltr_E"/>
    <property type="match status" value="1"/>
</dbReference>
<dbReference type="InterPro" id="IPR050082">
    <property type="entry name" value="RNA_methyltr_RlmE"/>
</dbReference>
<dbReference type="InterPro" id="IPR002877">
    <property type="entry name" value="RNA_MeTrfase_FtsJ_dom"/>
</dbReference>
<dbReference type="InterPro" id="IPR015507">
    <property type="entry name" value="rRNA-MeTfrase_E"/>
</dbReference>
<dbReference type="InterPro" id="IPR029063">
    <property type="entry name" value="SAM-dependent_MTases_sf"/>
</dbReference>
<dbReference type="PANTHER" id="PTHR10920">
    <property type="entry name" value="RIBOSOMAL RNA METHYLTRANSFERASE"/>
    <property type="match status" value="1"/>
</dbReference>
<dbReference type="PANTHER" id="PTHR10920:SF18">
    <property type="entry name" value="RRNA METHYLTRANSFERASE 2, MITOCHONDRIAL"/>
    <property type="match status" value="1"/>
</dbReference>
<dbReference type="Pfam" id="PF01728">
    <property type="entry name" value="FtsJ"/>
    <property type="match status" value="1"/>
</dbReference>
<dbReference type="PIRSF" id="PIRSF005461">
    <property type="entry name" value="23S_rRNA_mtase"/>
    <property type="match status" value="1"/>
</dbReference>
<dbReference type="SUPFAM" id="SSF53335">
    <property type="entry name" value="S-adenosyl-L-methionine-dependent methyltransferases"/>
    <property type="match status" value="1"/>
</dbReference>
<name>RLME_FRATF</name>
<protein>
    <recommendedName>
        <fullName evidence="1">Ribosomal RNA large subunit methyltransferase E</fullName>
        <ecNumber evidence="1">2.1.1.166</ecNumber>
    </recommendedName>
    <alternativeName>
        <fullName evidence="1">23S rRNA Um2552 methyltransferase</fullName>
    </alternativeName>
    <alternativeName>
        <fullName evidence="1">rRNA (uridine-2'-O-)-methyltransferase</fullName>
    </alternativeName>
</protein>
<gene>
    <name evidence="1" type="primary">rlmE</name>
    <name evidence="1" type="synonym">ftsJ</name>
    <name evidence="1" type="synonym">rrmJ</name>
    <name type="ordered locus">FTA_0455</name>
</gene>
<reference key="1">
    <citation type="journal article" date="2009" name="PLoS ONE">
        <title>Complete genome sequence of Francisella tularensis subspecies holarctica FTNF002-00.</title>
        <authorList>
            <person name="Barabote R.D."/>
            <person name="Xie G."/>
            <person name="Brettin T.S."/>
            <person name="Hinrichs S.H."/>
            <person name="Fey P.D."/>
            <person name="Jay J.J."/>
            <person name="Engle J.L."/>
            <person name="Godbole S.D."/>
            <person name="Noronha J.M."/>
            <person name="Scheuermann R.H."/>
            <person name="Zhou L.W."/>
            <person name="Lion C."/>
            <person name="Dempsey M.P."/>
        </authorList>
    </citation>
    <scope>NUCLEOTIDE SEQUENCE [LARGE SCALE GENOMIC DNA]</scope>
    <source>
        <strain>FTNF002-00 / FTA</strain>
    </source>
</reference>
<comment type="function">
    <text evidence="1">Specifically methylates the uridine in position 2552 of 23S rRNA at the 2'-O position of the ribose in the fully assembled 50S ribosomal subunit.</text>
</comment>
<comment type="catalytic activity">
    <reaction evidence="1">
        <text>uridine(2552) in 23S rRNA + S-adenosyl-L-methionine = 2'-O-methyluridine(2552) in 23S rRNA + S-adenosyl-L-homocysteine + H(+)</text>
        <dbReference type="Rhea" id="RHEA:42720"/>
        <dbReference type="Rhea" id="RHEA-COMP:10202"/>
        <dbReference type="Rhea" id="RHEA-COMP:10203"/>
        <dbReference type="ChEBI" id="CHEBI:15378"/>
        <dbReference type="ChEBI" id="CHEBI:57856"/>
        <dbReference type="ChEBI" id="CHEBI:59789"/>
        <dbReference type="ChEBI" id="CHEBI:65315"/>
        <dbReference type="ChEBI" id="CHEBI:74478"/>
        <dbReference type="EC" id="2.1.1.166"/>
    </reaction>
</comment>
<comment type="subcellular location">
    <subcellularLocation>
        <location evidence="1">Cytoplasm</location>
    </subcellularLocation>
</comment>
<comment type="similarity">
    <text evidence="1">Belongs to the class I-like SAM-binding methyltransferase superfamily. RNA methyltransferase RlmE family.</text>
</comment>
<accession>A7NAC9</accession>
<sequence length="206" mass="23175">MSKGSSTKKWLHEHTSDYYVIQANKLGYRSRASFKILEIQDKYQLFKPNMFVVDLGASPGGWSEQVIKYIGKNGKLIALDLLEMAPIAGVEFIQGDFSSDETYQKLNTLVNNQKIDCVISDMAPNLSGNKTSDQAKSIYLLELALDFANTNLNKNGSFVAKVFQGQGSDEYLKLVRESFNKVIQFKPKSSRAKSREFYVIATEFKG</sequence>
<evidence type="ECO:0000255" key="1">
    <source>
        <dbReference type="HAMAP-Rule" id="MF_01547"/>
    </source>
</evidence>